<accession>Q4ZQ90</accession>
<comment type="function">
    <text evidence="1">O-methyltransferase that catalyzes the 2 O-methylation steps in the ubiquinone biosynthetic pathway.</text>
</comment>
<comment type="catalytic activity">
    <reaction evidence="1">
        <text>a 3-demethylubiquinol + S-adenosyl-L-methionine = a ubiquinol + S-adenosyl-L-homocysteine + H(+)</text>
        <dbReference type="Rhea" id="RHEA:44380"/>
        <dbReference type="Rhea" id="RHEA-COMP:9566"/>
        <dbReference type="Rhea" id="RHEA-COMP:10914"/>
        <dbReference type="ChEBI" id="CHEBI:15378"/>
        <dbReference type="ChEBI" id="CHEBI:17976"/>
        <dbReference type="ChEBI" id="CHEBI:57856"/>
        <dbReference type="ChEBI" id="CHEBI:59789"/>
        <dbReference type="ChEBI" id="CHEBI:84422"/>
        <dbReference type="EC" id="2.1.1.64"/>
    </reaction>
</comment>
<comment type="catalytic activity">
    <reaction evidence="1">
        <text>a 3-(all-trans-polyprenyl)benzene-1,2-diol + S-adenosyl-L-methionine = a 2-methoxy-6-(all-trans-polyprenyl)phenol + S-adenosyl-L-homocysteine + H(+)</text>
        <dbReference type="Rhea" id="RHEA:31411"/>
        <dbReference type="Rhea" id="RHEA-COMP:9550"/>
        <dbReference type="Rhea" id="RHEA-COMP:9551"/>
        <dbReference type="ChEBI" id="CHEBI:15378"/>
        <dbReference type="ChEBI" id="CHEBI:57856"/>
        <dbReference type="ChEBI" id="CHEBI:59789"/>
        <dbReference type="ChEBI" id="CHEBI:62729"/>
        <dbReference type="ChEBI" id="CHEBI:62731"/>
        <dbReference type="EC" id="2.1.1.222"/>
    </reaction>
</comment>
<comment type="pathway">
    <text evidence="1">Cofactor biosynthesis; ubiquinone biosynthesis.</text>
</comment>
<comment type="similarity">
    <text evidence="1">Belongs to the methyltransferase superfamily. UbiG/COQ3 family.</text>
</comment>
<reference key="1">
    <citation type="journal article" date="2005" name="Proc. Natl. Acad. Sci. U.S.A.">
        <title>Comparison of the complete genome sequences of Pseudomonas syringae pv. syringae B728a and pv. tomato DC3000.</title>
        <authorList>
            <person name="Feil H."/>
            <person name="Feil W.S."/>
            <person name="Chain P."/>
            <person name="Larimer F."/>
            <person name="Dibartolo G."/>
            <person name="Copeland A."/>
            <person name="Lykidis A."/>
            <person name="Trong S."/>
            <person name="Nolan M."/>
            <person name="Goltsman E."/>
            <person name="Thiel J."/>
            <person name="Malfatti S."/>
            <person name="Loper J.E."/>
            <person name="Lapidus A."/>
            <person name="Detter J.C."/>
            <person name="Land M."/>
            <person name="Richardson P.M."/>
            <person name="Kyrpides N.C."/>
            <person name="Ivanova N."/>
            <person name="Lindow S.E."/>
        </authorList>
    </citation>
    <scope>NUCLEOTIDE SEQUENCE [LARGE SCALE GENOMIC DNA]</scope>
    <source>
        <strain>B728a</strain>
    </source>
</reference>
<name>UBIG_PSEU2</name>
<gene>
    <name evidence="1" type="primary">ubiG</name>
    <name type="ordered locus">Psyr_3650</name>
</gene>
<keyword id="KW-0489">Methyltransferase</keyword>
<keyword id="KW-0949">S-adenosyl-L-methionine</keyword>
<keyword id="KW-0808">Transferase</keyword>
<keyword id="KW-0831">Ubiquinone biosynthesis</keyword>
<dbReference type="EC" id="2.1.1.222" evidence="1"/>
<dbReference type="EC" id="2.1.1.64" evidence="1"/>
<dbReference type="EMBL" id="CP000075">
    <property type="protein sequence ID" value="AAY38682.1"/>
    <property type="molecule type" value="Genomic_DNA"/>
</dbReference>
<dbReference type="RefSeq" id="WP_003369710.1">
    <property type="nucleotide sequence ID" value="NC_007005.1"/>
</dbReference>
<dbReference type="RefSeq" id="YP_236720.1">
    <property type="nucleotide sequence ID" value="NC_007005.1"/>
</dbReference>
<dbReference type="SMR" id="Q4ZQ90"/>
<dbReference type="STRING" id="205918.Psyr_3650"/>
<dbReference type="GeneID" id="77279494"/>
<dbReference type="KEGG" id="psb:Psyr_3650"/>
<dbReference type="PATRIC" id="fig|205918.7.peg.3748"/>
<dbReference type="eggNOG" id="COG2227">
    <property type="taxonomic scope" value="Bacteria"/>
</dbReference>
<dbReference type="HOGENOM" id="CLU_042432_5_0_6"/>
<dbReference type="OrthoDB" id="9801538at2"/>
<dbReference type="UniPathway" id="UPA00232"/>
<dbReference type="Proteomes" id="UP000000426">
    <property type="component" value="Chromosome"/>
</dbReference>
<dbReference type="GO" id="GO:0102208">
    <property type="term" value="F:2-polyprenyl-6-hydroxyphenol methylase activity"/>
    <property type="evidence" value="ECO:0007669"/>
    <property type="project" value="UniProtKB-EC"/>
</dbReference>
<dbReference type="GO" id="GO:0061542">
    <property type="term" value="F:3-demethylubiquinol 3-O-methyltransferase activity"/>
    <property type="evidence" value="ECO:0007669"/>
    <property type="project" value="UniProtKB-UniRule"/>
</dbReference>
<dbReference type="GO" id="GO:0010420">
    <property type="term" value="F:polyprenyldihydroxybenzoate methyltransferase activity"/>
    <property type="evidence" value="ECO:0007669"/>
    <property type="project" value="InterPro"/>
</dbReference>
<dbReference type="GO" id="GO:0032259">
    <property type="term" value="P:methylation"/>
    <property type="evidence" value="ECO:0007669"/>
    <property type="project" value="UniProtKB-KW"/>
</dbReference>
<dbReference type="CDD" id="cd02440">
    <property type="entry name" value="AdoMet_MTases"/>
    <property type="match status" value="1"/>
</dbReference>
<dbReference type="FunFam" id="3.40.50.150:FF:000028">
    <property type="entry name" value="Ubiquinone biosynthesis O-methyltransferase"/>
    <property type="match status" value="1"/>
</dbReference>
<dbReference type="Gene3D" id="3.40.50.150">
    <property type="entry name" value="Vaccinia Virus protein VP39"/>
    <property type="match status" value="1"/>
</dbReference>
<dbReference type="HAMAP" id="MF_00472">
    <property type="entry name" value="UbiG"/>
    <property type="match status" value="1"/>
</dbReference>
<dbReference type="InterPro" id="IPR029063">
    <property type="entry name" value="SAM-dependent_MTases_sf"/>
</dbReference>
<dbReference type="InterPro" id="IPR010233">
    <property type="entry name" value="UbiG_MeTrfase"/>
</dbReference>
<dbReference type="NCBIfam" id="TIGR01983">
    <property type="entry name" value="UbiG"/>
    <property type="match status" value="1"/>
</dbReference>
<dbReference type="PANTHER" id="PTHR43464">
    <property type="entry name" value="METHYLTRANSFERASE"/>
    <property type="match status" value="1"/>
</dbReference>
<dbReference type="PANTHER" id="PTHR43464:SF19">
    <property type="entry name" value="UBIQUINONE BIOSYNTHESIS O-METHYLTRANSFERASE, MITOCHONDRIAL"/>
    <property type="match status" value="1"/>
</dbReference>
<dbReference type="Pfam" id="PF13489">
    <property type="entry name" value="Methyltransf_23"/>
    <property type="match status" value="1"/>
</dbReference>
<dbReference type="SUPFAM" id="SSF53335">
    <property type="entry name" value="S-adenosyl-L-methionine-dependent methyltransferases"/>
    <property type="match status" value="1"/>
</dbReference>
<organism>
    <name type="scientific">Pseudomonas syringae pv. syringae (strain B728a)</name>
    <dbReference type="NCBI Taxonomy" id="205918"/>
    <lineage>
        <taxon>Bacteria</taxon>
        <taxon>Pseudomonadati</taxon>
        <taxon>Pseudomonadota</taxon>
        <taxon>Gammaproteobacteria</taxon>
        <taxon>Pseudomonadales</taxon>
        <taxon>Pseudomonadaceae</taxon>
        <taxon>Pseudomonas</taxon>
        <taxon>Pseudomonas syringae</taxon>
    </lineage>
</organism>
<feature type="chain" id="PRO_0000241721" description="Ubiquinone biosynthesis O-methyltransferase">
    <location>
        <begin position="1"/>
        <end position="232"/>
    </location>
</feature>
<feature type="binding site" evidence="1">
    <location>
        <position position="36"/>
    </location>
    <ligand>
        <name>S-adenosyl-L-methionine</name>
        <dbReference type="ChEBI" id="CHEBI:59789"/>
    </ligand>
</feature>
<feature type="binding site" evidence="1">
    <location>
        <position position="55"/>
    </location>
    <ligand>
        <name>S-adenosyl-L-methionine</name>
        <dbReference type="ChEBI" id="CHEBI:59789"/>
    </ligand>
</feature>
<feature type="binding site" evidence="1">
    <location>
        <position position="76"/>
    </location>
    <ligand>
        <name>S-adenosyl-L-methionine</name>
        <dbReference type="ChEBI" id="CHEBI:59789"/>
    </ligand>
</feature>
<feature type="binding site" evidence="1">
    <location>
        <position position="120"/>
    </location>
    <ligand>
        <name>S-adenosyl-L-methionine</name>
        <dbReference type="ChEBI" id="CHEBI:59789"/>
    </ligand>
</feature>
<proteinExistence type="inferred from homology"/>
<sequence>MSNVDRAEIAKFEALAHRWWDRESEFKPLHDINPLRVNWIDERVGLAGKKVLDVGCGGGILSEAMALRGATVTGIDMGEAPLAVAQLHQLESGVSVEYRQITAEDMAEEMPEQYDVVTCLEMLEHVPDPSSVIRACYRMVKPGGQVFFSTINRNPKAYLFAVVGAEYILNLLPRGTHDFKKFIRPSELGAWSRDAGLQVKDVIGLTYNPLTKHYKLTSDVGVNYMIQTLREA</sequence>
<protein>
    <recommendedName>
        <fullName evidence="1">Ubiquinone biosynthesis O-methyltransferase</fullName>
    </recommendedName>
    <alternativeName>
        <fullName evidence="1">2-polyprenyl-6-hydroxyphenol methylase</fullName>
        <ecNumber evidence="1">2.1.1.222</ecNumber>
    </alternativeName>
    <alternativeName>
        <fullName evidence="1">3-demethylubiquinone 3-O-methyltransferase</fullName>
        <ecNumber evidence="1">2.1.1.64</ecNumber>
    </alternativeName>
</protein>
<evidence type="ECO:0000255" key="1">
    <source>
        <dbReference type="HAMAP-Rule" id="MF_00472"/>
    </source>
</evidence>